<comment type="function">
    <text evidence="1">Catalyzes the decarboxylation of orotidine 5'-monophosphate (OMP) to uridine 5'-monophosphate (UMP).</text>
</comment>
<comment type="catalytic activity">
    <reaction evidence="1">
        <text>orotidine 5'-phosphate + H(+) = UMP + CO2</text>
        <dbReference type="Rhea" id="RHEA:11596"/>
        <dbReference type="ChEBI" id="CHEBI:15378"/>
        <dbReference type="ChEBI" id="CHEBI:16526"/>
        <dbReference type="ChEBI" id="CHEBI:57538"/>
        <dbReference type="ChEBI" id="CHEBI:57865"/>
        <dbReference type="EC" id="4.1.1.23"/>
    </reaction>
</comment>
<comment type="pathway">
    <text evidence="1">Pyrimidine metabolism; UMP biosynthesis via de novo pathway; UMP from orotate: step 2/2.</text>
</comment>
<comment type="subunit">
    <text evidence="1">Homodimer.</text>
</comment>
<comment type="similarity">
    <text evidence="1">Belongs to the OMP decarboxylase family. Type 1 subfamily.</text>
</comment>
<name>PYRF_NITWN</name>
<proteinExistence type="inferred from homology"/>
<sequence>MTGSHDSDLAREKLIVALDYWNIEDARKLVRDLGDGVSFYKVGLGLQLVGGNEFARELIAEGKRVFLDYKYYDIEETVQRAVAQAAELKIAFLTVHGVTSIMKAAVAGRGNSDMKILGVTVLTSMDAEDIKEMGFECSVEDLVVARARRALEVGVDGVVASALEAAELRKHTNNKLMIVSPGIRPSGGARHDQKRVATPFEAMRAGADYLVLGRPIYAADNPKAAAQAIIREMADALRPD</sequence>
<keyword id="KW-0210">Decarboxylase</keyword>
<keyword id="KW-0456">Lyase</keyword>
<keyword id="KW-0665">Pyrimidine biosynthesis</keyword>
<keyword id="KW-1185">Reference proteome</keyword>
<feature type="chain" id="PRO_0000241879" description="Orotidine 5'-phosphate decarboxylase">
    <location>
        <begin position="1"/>
        <end position="240"/>
    </location>
</feature>
<feature type="active site" description="Proton donor" evidence="1">
    <location>
        <position position="70"/>
    </location>
</feature>
<feature type="binding site" evidence="1">
    <location>
        <position position="19"/>
    </location>
    <ligand>
        <name>substrate</name>
    </ligand>
</feature>
<feature type="binding site" evidence="1">
    <location>
        <position position="41"/>
    </location>
    <ligand>
        <name>substrate</name>
    </ligand>
</feature>
<feature type="binding site" evidence="1">
    <location>
        <begin position="68"/>
        <end position="77"/>
    </location>
    <ligand>
        <name>substrate</name>
    </ligand>
</feature>
<feature type="binding site" evidence="1">
    <location>
        <position position="123"/>
    </location>
    <ligand>
        <name>substrate</name>
    </ligand>
</feature>
<feature type="binding site" evidence="1">
    <location>
        <position position="184"/>
    </location>
    <ligand>
        <name>substrate</name>
    </ligand>
</feature>
<feature type="binding site" evidence="1">
    <location>
        <position position="193"/>
    </location>
    <ligand>
        <name>substrate</name>
    </ligand>
</feature>
<feature type="binding site" evidence="1">
    <location>
        <position position="213"/>
    </location>
    <ligand>
        <name>substrate</name>
    </ligand>
</feature>
<feature type="binding site" evidence="1">
    <location>
        <position position="214"/>
    </location>
    <ligand>
        <name>substrate</name>
    </ligand>
</feature>
<evidence type="ECO:0000255" key="1">
    <source>
        <dbReference type="HAMAP-Rule" id="MF_01200"/>
    </source>
</evidence>
<dbReference type="EC" id="4.1.1.23" evidence="1"/>
<dbReference type="EMBL" id="CP000115">
    <property type="protein sequence ID" value="ABA05122.1"/>
    <property type="molecule type" value="Genomic_DNA"/>
</dbReference>
<dbReference type="RefSeq" id="WP_011315118.1">
    <property type="nucleotide sequence ID" value="NC_007406.1"/>
</dbReference>
<dbReference type="SMR" id="Q3SRG9"/>
<dbReference type="STRING" id="323098.Nwi_1862"/>
<dbReference type="KEGG" id="nwi:Nwi_1862"/>
<dbReference type="eggNOG" id="COG0284">
    <property type="taxonomic scope" value="Bacteria"/>
</dbReference>
<dbReference type="HOGENOM" id="CLU_067069_1_0_5"/>
<dbReference type="OrthoDB" id="9806203at2"/>
<dbReference type="UniPathway" id="UPA00070">
    <property type="reaction ID" value="UER00120"/>
</dbReference>
<dbReference type="Proteomes" id="UP000002531">
    <property type="component" value="Chromosome"/>
</dbReference>
<dbReference type="GO" id="GO:0005829">
    <property type="term" value="C:cytosol"/>
    <property type="evidence" value="ECO:0007669"/>
    <property type="project" value="TreeGrafter"/>
</dbReference>
<dbReference type="GO" id="GO:0004590">
    <property type="term" value="F:orotidine-5'-phosphate decarboxylase activity"/>
    <property type="evidence" value="ECO:0007669"/>
    <property type="project" value="UniProtKB-UniRule"/>
</dbReference>
<dbReference type="GO" id="GO:0006207">
    <property type="term" value="P:'de novo' pyrimidine nucleobase biosynthetic process"/>
    <property type="evidence" value="ECO:0007669"/>
    <property type="project" value="InterPro"/>
</dbReference>
<dbReference type="GO" id="GO:0044205">
    <property type="term" value="P:'de novo' UMP biosynthetic process"/>
    <property type="evidence" value="ECO:0007669"/>
    <property type="project" value="UniProtKB-UniRule"/>
</dbReference>
<dbReference type="CDD" id="cd04725">
    <property type="entry name" value="OMP_decarboxylase_like"/>
    <property type="match status" value="1"/>
</dbReference>
<dbReference type="Gene3D" id="3.20.20.70">
    <property type="entry name" value="Aldolase class I"/>
    <property type="match status" value="1"/>
</dbReference>
<dbReference type="HAMAP" id="MF_01200_B">
    <property type="entry name" value="OMPdecase_type1_B"/>
    <property type="match status" value="1"/>
</dbReference>
<dbReference type="InterPro" id="IPR013785">
    <property type="entry name" value="Aldolase_TIM"/>
</dbReference>
<dbReference type="InterPro" id="IPR014732">
    <property type="entry name" value="OMPdecase"/>
</dbReference>
<dbReference type="InterPro" id="IPR047596">
    <property type="entry name" value="OMPdecase_bac"/>
</dbReference>
<dbReference type="InterPro" id="IPR001754">
    <property type="entry name" value="OMPdeCOase_dom"/>
</dbReference>
<dbReference type="InterPro" id="IPR011060">
    <property type="entry name" value="RibuloseP-bd_barrel"/>
</dbReference>
<dbReference type="NCBIfam" id="NF001273">
    <property type="entry name" value="PRK00230.1"/>
    <property type="match status" value="1"/>
</dbReference>
<dbReference type="NCBIfam" id="TIGR01740">
    <property type="entry name" value="pyrF"/>
    <property type="match status" value="1"/>
</dbReference>
<dbReference type="PANTHER" id="PTHR32119">
    <property type="entry name" value="OROTIDINE 5'-PHOSPHATE DECARBOXYLASE"/>
    <property type="match status" value="1"/>
</dbReference>
<dbReference type="PANTHER" id="PTHR32119:SF2">
    <property type="entry name" value="OROTIDINE 5'-PHOSPHATE DECARBOXYLASE"/>
    <property type="match status" value="1"/>
</dbReference>
<dbReference type="Pfam" id="PF00215">
    <property type="entry name" value="OMPdecase"/>
    <property type="match status" value="1"/>
</dbReference>
<dbReference type="SMART" id="SM00934">
    <property type="entry name" value="OMPdecase"/>
    <property type="match status" value="1"/>
</dbReference>
<dbReference type="SUPFAM" id="SSF51366">
    <property type="entry name" value="Ribulose-phoshate binding barrel"/>
    <property type="match status" value="1"/>
</dbReference>
<accession>Q3SRG9</accession>
<reference key="1">
    <citation type="journal article" date="2006" name="Appl. Environ. Microbiol.">
        <title>Genome sequence of the chemolithoautotrophic nitrite-oxidizing bacterium Nitrobacter winogradskyi Nb-255.</title>
        <authorList>
            <person name="Starkenburg S.R."/>
            <person name="Chain P.S.G."/>
            <person name="Sayavedra-Soto L.A."/>
            <person name="Hauser L."/>
            <person name="Land M.L."/>
            <person name="Larimer F.W."/>
            <person name="Malfatti S.A."/>
            <person name="Klotz M.G."/>
            <person name="Bottomley P.J."/>
            <person name="Arp D.J."/>
            <person name="Hickey W.J."/>
        </authorList>
    </citation>
    <scope>NUCLEOTIDE SEQUENCE [LARGE SCALE GENOMIC DNA]</scope>
    <source>
        <strain>ATCC 25391 / DSM 10237 / CIP 104748 / NCIMB 11846 / Nb-255</strain>
    </source>
</reference>
<gene>
    <name evidence="1" type="primary">pyrF</name>
    <name type="ordered locus">Nwi_1862</name>
</gene>
<organism>
    <name type="scientific">Nitrobacter winogradskyi (strain ATCC 25391 / DSM 10237 / CIP 104748 / NCIMB 11846 / Nb-255)</name>
    <dbReference type="NCBI Taxonomy" id="323098"/>
    <lineage>
        <taxon>Bacteria</taxon>
        <taxon>Pseudomonadati</taxon>
        <taxon>Pseudomonadota</taxon>
        <taxon>Alphaproteobacteria</taxon>
        <taxon>Hyphomicrobiales</taxon>
        <taxon>Nitrobacteraceae</taxon>
        <taxon>Nitrobacter</taxon>
    </lineage>
</organism>
<protein>
    <recommendedName>
        <fullName evidence="1">Orotidine 5'-phosphate decarboxylase</fullName>
        <ecNumber evidence="1">4.1.1.23</ecNumber>
    </recommendedName>
    <alternativeName>
        <fullName evidence="1">OMP decarboxylase</fullName>
        <shortName evidence="1">OMPDCase</shortName>
        <shortName evidence="1">OMPdecase</shortName>
    </alternativeName>
</protein>